<name>GLMU_LEGPH</name>
<protein>
    <recommendedName>
        <fullName evidence="1">Bifunctional protein GlmU</fullName>
    </recommendedName>
    <domain>
        <recommendedName>
            <fullName evidence="1">UDP-N-acetylglucosamine pyrophosphorylase</fullName>
            <ecNumber evidence="1">2.7.7.23</ecNumber>
        </recommendedName>
        <alternativeName>
            <fullName evidence="1">N-acetylglucosamine-1-phosphate uridyltransferase</fullName>
        </alternativeName>
    </domain>
    <domain>
        <recommendedName>
            <fullName evidence="1">Glucosamine-1-phosphate N-acetyltransferase</fullName>
            <ecNumber evidence="1">2.3.1.157</ecNumber>
        </recommendedName>
    </domain>
</protein>
<keyword id="KW-0012">Acyltransferase</keyword>
<keyword id="KW-0133">Cell shape</keyword>
<keyword id="KW-0961">Cell wall biogenesis/degradation</keyword>
<keyword id="KW-0963">Cytoplasm</keyword>
<keyword id="KW-0460">Magnesium</keyword>
<keyword id="KW-0479">Metal-binding</keyword>
<keyword id="KW-0511">Multifunctional enzyme</keyword>
<keyword id="KW-0548">Nucleotidyltransferase</keyword>
<keyword id="KW-0573">Peptidoglycan synthesis</keyword>
<keyword id="KW-1185">Reference proteome</keyword>
<keyword id="KW-0677">Repeat</keyword>
<keyword id="KW-0808">Transferase</keyword>
<evidence type="ECO:0000255" key="1">
    <source>
        <dbReference type="HAMAP-Rule" id="MF_01631"/>
    </source>
</evidence>
<gene>
    <name evidence="1" type="primary">glmU</name>
    <name type="ordered locus">lpg2875</name>
</gene>
<dbReference type="EC" id="2.7.7.23" evidence="1"/>
<dbReference type="EC" id="2.3.1.157" evidence="1"/>
<dbReference type="EMBL" id="AE017354">
    <property type="protein sequence ID" value="AAU28922.1"/>
    <property type="molecule type" value="Genomic_DNA"/>
</dbReference>
<dbReference type="RefSeq" id="WP_010948561.1">
    <property type="nucleotide sequence ID" value="NC_002942.5"/>
</dbReference>
<dbReference type="RefSeq" id="YP_096869.1">
    <property type="nucleotide sequence ID" value="NC_002942.5"/>
</dbReference>
<dbReference type="SMR" id="Q5ZRK6"/>
<dbReference type="STRING" id="272624.lpg2875"/>
<dbReference type="PaxDb" id="272624-lpg2875"/>
<dbReference type="GeneID" id="57036874"/>
<dbReference type="KEGG" id="lpn:lpg2875"/>
<dbReference type="PATRIC" id="fig|272624.6.peg.3062"/>
<dbReference type="eggNOG" id="COG1207">
    <property type="taxonomic scope" value="Bacteria"/>
</dbReference>
<dbReference type="HOGENOM" id="CLU_029499_15_2_6"/>
<dbReference type="OrthoDB" id="9775031at2"/>
<dbReference type="UniPathway" id="UPA00113">
    <property type="reaction ID" value="UER00532"/>
</dbReference>
<dbReference type="UniPathway" id="UPA00113">
    <property type="reaction ID" value="UER00533"/>
</dbReference>
<dbReference type="UniPathway" id="UPA00973"/>
<dbReference type="Proteomes" id="UP000000609">
    <property type="component" value="Chromosome"/>
</dbReference>
<dbReference type="GO" id="GO:0005737">
    <property type="term" value="C:cytoplasm"/>
    <property type="evidence" value="ECO:0007669"/>
    <property type="project" value="UniProtKB-SubCell"/>
</dbReference>
<dbReference type="GO" id="GO:0016020">
    <property type="term" value="C:membrane"/>
    <property type="evidence" value="ECO:0007669"/>
    <property type="project" value="GOC"/>
</dbReference>
<dbReference type="GO" id="GO:0019134">
    <property type="term" value="F:glucosamine-1-phosphate N-acetyltransferase activity"/>
    <property type="evidence" value="ECO:0007669"/>
    <property type="project" value="UniProtKB-UniRule"/>
</dbReference>
<dbReference type="GO" id="GO:0000287">
    <property type="term" value="F:magnesium ion binding"/>
    <property type="evidence" value="ECO:0007669"/>
    <property type="project" value="UniProtKB-UniRule"/>
</dbReference>
<dbReference type="GO" id="GO:0003977">
    <property type="term" value="F:UDP-N-acetylglucosamine diphosphorylase activity"/>
    <property type="evidence" value="ECO:0007669"/>
    <property type="project" value="UniProtKB-UniRule"/>
</dbReference>
<dbReference type="GO" id="GO:0000902">
    <property type="term" value="P:cell morphogenesis"/>
    <property type="evidence" value="ECO:0007669"/>
    <property type="project" value="UniProtKB-UniRule"/>
</dbReference>
<dbReference type="GO" id="GO:0071555">
    <property type="term" value="P:cell wall organization"/>
    <property type="evidence" value="ECO:0007669"/>
    <property type="project" value="UniProtKB-KW"/>
</dbReference>
<dbReference type="GO" id="GO:0009245">
    <property type="term" value="P:lipid A biosynthetic process"/>
    <property type="evidence" value="ECO:0007669"/>
    <property type="project" value="UniProtKB-UniRule"/>
</dbReference>
<dbReference type="GO" id="GO:0009252">
    <property type="term" value="P:peptidoglycan biosynthetic process"/>
    <property type="evidence" value="ECO:0007669"/>
    <property type="project" value="UniProtKB-UniRule"/>
</dbReference>
<dbReference type="GO" id="GO:0008360">
    <property type="term" value="P:regulation of cell shape"/>
    <property type="evidence" value="ECO:0007669"/>
    <property type="project" value="UniProtKB-KW"/>
</dbReference>
<dbReference type="GO" id="GO:0006048">
    <property type="term" value="P:UDP-N-acetylglucosamine biosynthetic process"/>
    <property type="evidence" value="ECO:0007669"/>
    <property type="project" value="UniProtKB-UniPathway"/>
</dbReference>
<dbReference type="CDD" id="cd02540">
    <property type="entry name" value="GT2_GlmU_N_bac"/>
    <property type="match status" value="1"/>
</dbReference>
<dbReference type="CDD" id="cd03353">
    <property type="entry name" value="LbH_GlmU_C"/>
    <property type="match status" value="1"/>
</dbReference>
<dbReference type="Gene3D" id="2.160.10.10">
    <property type="entry name" value="Hexapeptide repeat proteins"/>
    <property type="match status" value="1"/>
</dbReference>
<dbReference type="Gene3D" id="3.90.550.10">
    <property type="entry name" value="Spore Coat Polysaccharide Biosynthesis Protein SpsA, Chain A"/>
    <property type="match status" value="1"/>
</dbReference>
<dbReference type="HAMAP" id="MF_01631">
    <property type="entry name" value="GlmU"/>
    <property type="match status" value="1"/>
</dbReference>
<dbReference type="InterPro" id="IPR005882">
    <property type="entry name" value="Bifunctional_GlmU"/>
</dbReference>
<dbReference type="InterPro" id="IPR050065">
    <property type="entry name" value="GlmU-like"/>
</dbReference>
<dbReference type="InterPro" id="IPR038009">
    <property type="entry name" value="GlmU_C_LbH"/>
</dbReference>
<dbReference type="InterPro" id="IPR001451">
    <property type="entry name" value="Hexapep"/>
</dbReference>
<dbReference type="InterPro" id="IPR018357">
    <property type="entry name" value="Hexapep_transf_CS"/>
</dbReference>
<dbReference type="InterPro" id="IPR025877">
    <property type="entry name" value="MobA-like_NTP_Trfase"/>
</dbReference>
<dbReference type="InterPro" id="IPR029044">
    <property type="entry name" value="Nucleotide-diphossugar_trans"/>
</dbReference>
<dbReference type="InterPro" id="IPR011004">
    <property type="entry name" value="Trimer_LpxA-like_sf"/>
</dbReference>
<dbReference type="NCBIfam" id="TIGR01173">
    <property type="entry name" value="glmU"/>
    <property type="match status" value="1"/>
</dbReference>
<dbReference type="PANTHER" id="PTHR43584:SF3">
    <property type="entry name" value="BIFUNCTIONAL PROTEIN GLMU"/>
    <property type="match status" value="1"/>
</dbReference>
<dbReference type="PANTHER" id="PTHR43584">
    <property type="entry name" value="NUCLEOTIDYL TRANSFERASE"/>
    <property type="match status" value="1"/>
</dbReference>
<dbReference type="Pfam" id="PF00132">
    <property type="entry name" value="Hexapep"/>
    <property type="match status" value="2"/>
</dbReference>
<dbReference type="Pfam" id="PF12804">
    <property type="entry name" value="NTP_transf_3"/>
    <property type="match status" value="1"/>
</dbReference>
<dbReference type="SUPFAM" id="SSF53448">
    <property type="entry name" value="Nucleotide-diphospho-sugar transferases"/>
    <property type="match status" value="1"/>
</dbReference>
<dbReference type="SUPFAM" id="SSF51161">
    <property type="entry name" value="Trimeric LpxA-like enzymes"/>
    <property type="match status" value="1"/>
</dbReference>
<dbReference type="PROSITE" id="PS00101">
    <property type="entry name" value="HEXAPEP_TRANSFERASES"/>
    <property type="match status" value="1"/>
</dbReference>
<organism>
    <name type="scientific">Legionella pneumophila subsp. pneumophila (strain Philadelphia 1 / ATCC 33152 / DSM 7513)</name>
    <dbReference type="NCBI Taxonomy" id="272624"/>
    <lineage>
        <taxon>Bacteria</taxon>
        <taxon>Pseudomonadati</taxon>
        <taxon>Pseudomonadota</taxon>
        <taxon>Gammaproteobacteria</taxon>
        <taxon>Legionellales</taxon>
        <taxon>Legionellaceae</taxon>
        <taxon>Legionella</taxon>
    </lineage>
</organism>
<accession>Q5ZRK6</accession>
<sequence length="461" mass="50391">MNLQIIILAAGQGKRMYSDTPKVLHHLAGKPLLTHVVETAQQLNPNAIHVIYGHGGEQIKSSLPNLPVHWVHQAEQLGTGHAVLQAMPHIPDDAYVLVLSADVPLIQVETLQSLIECSQRQNPDHSVLALLVAELENPSGLGRIIRNNQGEIYSIVEEKDANEQVKNIKEIYSGVCCTLANNLKKWLPQLSNSNAQGEYYLTEIISLAVQNKTPITSLTAKNSFEVQGINNRQQLQQLERIWQQRAANQLMEKGATLADANRFDLRGELYCGKDVYIDINCIFTGKVVLGNGCKIGPNCSLTNVTLGDGCEVYANSVLEGCHIANDCHIGPFARLRSGTQLASHCKIGNFVETKKAIFDEGTKASHLSYLGDVLLGKNVNVGAGTITCNYDGVNKHQTIIEDGVFIGSDTQLIAPVTVGANATIGAGSTIRRNVPPDELTLTESRQKTIYGWKRPVKRERD</sequence>
<proteinExistence type="inferred from homology"/>
<feature type="chain" id="PRO_0000233792" description="Bifunctional protein GlmU">
    <location>
        <begin position="1"/>
        <end position="461"/>
    </location>
</feature>
<feature type="region of interest" description="Pyrophosphorylase" evidence="1">
    <location>
        <begin position="1"/>
        <end position="232"/>
    </location>
</feature>
<feature type="region of interest" description="Linker" evidence="1">
    <location>
        <begin position="233"/>
        <end position="253"/>
    </location>
</feature>
<feature type="region of interest" description="N-acetyltransferase" evidence="1">
    <location>
        <begin position="254"/>
        <end position="461"/>
    </location>
</feature>
<feature type="active site" description="Proton acceptor" evidence="1">
    <location>
        <position position="366"/>
    </location>
</feature>
<feature type="binding site" evidence="1">
    <location>
        <begin position="8"/>
        <end position="11"/>
    </location>
    <ligand>
        <name>UDP-N-acetyl-alpha-D-glucosamine</name>
        <dbReference type="ChEBI" id="CHEBI:57705"/>
    </ligand>
</feature>
<feature type="binding site" evidence="1">
    <location>
        <position position="22"/>
    </location>
    <ligand>
        <name>UDP-N-acetyl-alpha-D-glucosamine</name>
        <dbReference type="ChEBI" id="CHEBI:57705"/>
    </ligand>
</feature>
<feature type="binding site" evidence="1">
    <location>
        <position position="73"/>
    </location>
    <ligand>
        <name>UDP-N-acetyl-alpha-D-glucosamine</name>
        <dbReference type="ChEBI" id="CHEBI:57705"/>
    </ligand>
</feature>
<feature type="binding site" evidence="1">
    <location>
        <begin position="78"/>
        <end position="79"/>
    </location>
    <ligand>
        <name>UDP-N-acetyl-alpha-D-glucosamine</name>
        <dbReference type="ChEBI" id="CHEBI:57705"/>
    </ligand>
</feature>
<feature type="binding site" evidence="1">
    <location>
        <position position="102"/>
    </location>
    <ligand>
        <name>Mg(2+)</name>
        <dbReference type="ChEBI" id="CHEBI:18420"/>
    </ligand>
</feature>
<feature type="binding site" evidence="1">
    <location>
        <position position="142"/>
    </location>
    <ligand>
        <name>UDP-N-acetyl-alpha-D-glucosamine</name>
        <dbReference type="ChEBI" id="CHEBI:57705"/>
    </ligand>
</feature>
<feature type="binding site" evidence="1">
    <location>
        <position position="157"/>
    </location>
    <ligand>
        <name>UDP-N-acetyl-alpha-D-glucosamine</name>
        <dbReference type="ChEBI" id="CHEBI:57705"/>
    </ligand>
</feature>
<feature type="binding site" evidence="1">
    <location>
        <position position="230"/>
    </location>
    <ligand>
        <name>Mg(2+)</name>
        <dbReference type="ChEBI" id="CHEBI:18420"/>
    </ligand>
</feature>
<feature type="binding site" evidence="1">
    <location>
        <position position="230"/>
    </location>
    <ligand>
        <name>UDP-N-acetyl-alpha-D-glucosamine</name>
        <dbReference type="ChEBI" id="CHEBI:57705"/>
    </ligand>
</feature>
<feature type="binding site" evidence="1">
    <location>
        <position position="336"/>
    </location>
    <ligand>
        <name>UDP-N-acetyl-alpha-D-glucosamine</name>
        <dbReference type="ChEBI" id="CHEBI:57705"/>
    </ligand>
</feature>
<feature type="binding site" evidence="1">
    <location>
        <position position="354"/>
    </location>
    <ligand>
        <name>UDP-N-acetyl-alpha-D-glucosamine</name>
        <dbReference type="ChEBI" id="CHEBI:57705"/>
    </ligand>
</feature>
<feature type="binding site" evidence="1">
    <location>
        <position position="369"/>
    </location>
    <ligand>
        <name>UDP-N-acetyl-alpha-D-glucosamine</name>
        <dbReference type="ChEBI" id="CHEBI:57705"/>
    </ligand>
</feature>
<feature type="binding site" evidence="1">
    <location>
        <position position="380"/>
    </location>
    <ligand>
        <name>UDP-N-acetyl-alpha-D-glucosamine</name>
        <dbReference type="ChEBI" id="CHEBI:57705"/>
    </ligand>
</feature>
<feature type="binding site" evidence="1">
    <location>
        <position position="383"/>
    </location>
    <ligand>
        <name>acetyl-CoA</name>
        <dbReference type="ChEBI" id="CHEBI:57288"/>
    </ligand>
</feature>
<feature type="binding site" evidence="1">
    <location>
        <begin position="389"/>
        <end position="390"/>
    </location>
    <ligand>
        <name>acetyl-CoA</name>
        <dbReference type="ChEBI" id="CHEBI:57288"/>
    </ligand>
</feature>
<feature type="binding site" evidence="1">
    <location>
        <position position="408"/>
    </location>
    <ligand>
        <name>acetyl-CoA</name>
        <dbReference type="ChEBI" id="CHEBI:57288"/>
    </ligand>
</feature>
<feature type="binding site" evidence="1">
    <location>
        <position position="426"/>
    </location>
    <ligand>
        <name>acetyl-CoA</name>
        <dbReference type="ChEBI" id="CHEBI:57288"/>
    </ligand>
</feature>
<reference key="1">
    <citation type="journal article" date="2004" name="Science">
        <title>The genomic sequence of the accidental pathogen Legionella pneumophila.</title>
        <authorList>
            <person name="Chien M."/>
            <person name="Morozova I."/>
            <person name="Shi S."/>
            <person name="Sheng H."/>
            <person name="Chen J."/>
            <person name="Gomez S.M."/>
            <person name="Asamani G."/>
            <person name="Hill K."/>
            <person name="Nuara J."/>
            <person name="Feder M."/>
            <person name="Rineer J."/>
            <person name="Greenberg J.J."/>
            <person name="Steshenko V."/>
            <person name="Park S.H."/>
            <person name="Zhao B."/>
            <person name="Teplitskaya E."/>
            <person name="Edwards J.R."/>
            <person name="Pampou S."/>
            <person name="Georghiou A."/>
            <person name="Chou I.-C."/>
            <person name="Iannuccilli W."/>
            <person name="Ulz M.E."/>
            <person name="Kim D.H."/>
            <person name="Geringer-Sameth A."/>
            <person name="Goldsberry C."/>
            <person name="Morozov P."/>
            <person name="Fischer S.G."/>
            <person name="Segal G."/>
            <person name="Qu X."/>
            <person name="Rzhetsky A."/>
            <person name="Zhang P."/>
            <person name="Cayanis E."/>
            <person name="De Jong P.J."/>
            <person name="Ju J."/>
            <person name="Kalachikov S."/>
            <person name="Shuman H.A."/>
            <person name="Russo J.J."/>
        </authorList>
    </citation>
    <scope>NUCLEOTIDE SEQUENCE [LARGE SCALE GENOMIC DNA]</scope>
    <source>
        <strain>Philadelphia 1 / ATCC 33152 / DSM 7513</strain>
    </source>
</reference>
<comment type="function">
    <text evidence="1">Catalyzes the last two sequential reactions in the de novo biosynthetic pathway for UDP-N-acetylglucosamine (UDP-GlcNAc). The C-terminal domain catalyzes the transfer of acetyl group from acetyl coenzyme A to glucosamine-1-phosphate (GlcN-1-P) to produce N-acetylglucosamine-1-phosphate (GlcNAc-1-P), which is converted into UDP-GlcNAc by the transfer of uridine 5-monophosphate (from uridine 5-triphosphate), a reaction catalyzed by the N-terminal domain.</text>
</comment>
<comment type="catalytic activity">
    <reaction evidence="1">
        <text>alpha-D-glucosamine 1-phosphate + acetyl-CoA = N-acetyl-alpha-D-glucosamine 1-phosphate + CoA + H(+)</text>
        <dbReference type="Rhea" id="RHEA:13725"/>
        <dbReference type="ChEBI" id="CHEBI:15378"/>
        <dbReference type="ChEBI" id="CHEBI:57287"/>
        <dbReference type="ChEBI" id="CHEBI:57288"/>
        <dbReference type="ChEBI" id="CHEBI:57776"/>
        <dbReference type="ChEBI" id="CHEBI:58516"/>
        <dbReference type="EC" id="2.3.1.157"/>
    </reaction>
</comment>
<comment type="catalytic activity">
    <reaction evidence="1">
        <text>N-acetyl-alpha-D-glucosamine 1-phosphate + UTP + H(+) = UDP-N-acetyl-alpha-D-glucosamine + diphosphate</text>
        <dbReference type="Rhea" id="RHEA:13509"/>
        <dbReference type="ChEBI" id="CHEBI:15378"/>
        <dbReference type="ChEBI" id="CHEBI:33019"/>
        <dbReference type="ChEBI" id="CHEBI:46398"/>
        <dbReference type="ChEBI" id="CHEBI:57705"/>
        <dbReference type="ChEBI" id="CHEBI:57776"/>
        <dbReference type="EC" id="2.7.7.23"/>
    </reaction>
</comment>
<comment type="cofactor">
    <cofactor evidence="1">
        <name>Mg(2+)</name>
        <dbReference type="ChEBI" id="CHEBI:18420"/>
    </cofactor>
    <text evidence="1">Binds 1 Mg(2+) ion per subunit.</text>
</comment>
<comment type="pathway">
    <text evidence="1">Nucleotide-sugar biosynthesis; UDP-N-acetyl-alpha-D-glucosamine biosynthesis; N-acetyl-alpha-D-glucosamine 1-phosphate from alpha-D-glucosamine 6-phosphate (route II): step 2/2.</text>
</comment>
<comment type="pathway">
    <text evidence="1">Nucleotide-sugar biosynthesis; UDP-N-acetyl-alpha-D-glucosamine biosynthesis; UDP-N-acetyl-alpha-D-glucosamine from N-acetyl-alpha-D-glucosamine 1-phosphate: step 1/1.</text>
</comment>
<comment type="pathway">
    <text evidence="1">Bacterial outer membrane biogenesis; LPS lipid A biosynthesis.</text>
</comment>
<comment type="subunit">
    <text evidence="1">Homotrimer.</text>
</comment>
<comment type="subcellular location">
    <subcellularLocation>
        <location evidence="1">Cytoplasm</location>
    </subcellularLocation>
</comment>
<comment type="similarity">
    <text evidence="1">In the N-terminal section; belongs to the N-acetylglucosamine-1-phosphate uridyltransferase family.</text>
</comment>
<comment type="similarity">
    <text evidence="1">In the C-terminal section; belongs to the transferase hexapeptide repeat family.</text>
</comment>